<accession>Q88CV2</accession>
<keyword id="KW-0028">Amino-acid biosynthesis</keyword>
<keyword id="KW-0057">Aromatic amino acid biosynthesis</keyword>
<keyword id="KW-0170">Cobalt</keyword>
<keyword id="KW-0963">Cytoplasm</keyword>
<keyword id="KW-0456">Lyase</keyword>
<keyword id="KW-0479">Metal-binding</keyword>
<keyword id="KW-0520">NAD</keyword>
<keyword id="KW-0547">Nucleotide-binding</keyword>
<keyword id="KW-1185">Reference proteome</keyword>
<keyword id="KW-0862">Zinc</keyword>
<comment type="function">
    <text evidence="1">Catalyzes the conversion of 3-deoxy-D-arabino-heptulosonate 7-phosphate (DAHP) to dehydroquinate (DHQ).</text>
</comment>
<comment type="catalytic activity">
    <reaction evidence="1">
        <text>7-phospho-2-dehydro-3-deoxy-D-arabino-heptonate = 3-dehydroquinate + phosphate</text>
        <dbReference type="Rhea" id="RHEA:21968"/>
        <dbReference type="ChEBI" id="CHEBI:32364"/>
        <dbReference type="ChEBI" id="CHEBI:43474"/>
        <dbReference type="ChEBI" id="CHEBI:58394"/>
        <dbReference type="EC" id="4.2.3.4"/>
    </reaction>
</comment>
<comment type="cofactor">
    <cofactor evidence="1">
        <name>NAD(+)</name>
        <dbReference type="ChEBI" id="CHEBI:57540"/>
    </cofactor>
</comment>
<comment type="cofactor">
    <cofactor evidence="1">
        <name>Co(2+)</name>
        <dbReference type="ChEBI" id="CHEBI:48828"/>
    </cofactor>
    <cofactor evidence="1">
        <name>Zn(2+)</name>
        <dbReference type="ChEBI" id="CHEBI:29105"/>
    </cofactor>
    <text evidence="1">Binds 1 divalent metal cation per subunit. Can use either Co(2+) or Zn(2+).</text>
</comment>
<comment type="pathway">
    <text evidence="1">Metabolic intermediate biosynthesis; chorismate biosynthesis; chorismate from D-erythrose 4-phosphate and phosphoenolpyruvate: step 2/7.</text>
</comment>
<comment type="subcellular location">
    <subcellularLocation>
        <location evidence="1">Cytoplasm</location>
    </subcellularLocation>
</comment>
<comment type="similarity">
    <text evidence="1">Belongs to the sugar phosphate cyclases superfamily. Dehydroquinate synthase family.</text>
</comment>
<evidence type="ECO:0000255" key="1">
    <source>
        <dbReference type="HAMAP-Rule" id="MF_00110"/>
    </source>
</evidence>
<reference key="1">
    <citation type="journal article" date="2002" name="Environ. Microbiol.">
        <title>Complete genome sequence and comparative analysis of the metabolically versatile Pseudomonas putida KT2440.</title>
        <authorList>
            <person name="Nelson K.E."/>
            <person name="Weinel C."/>
            <person name="Paulsen I.T."/>
            <person name="Dodson R.J."/>
            <person name="Hilbert H."/>
            <person name="Martins dos Santos V.A.P."/>
            <person name="Fouts D.E."/>
            <person name="Gill S.R."/>
            <person name="Pop M."/>
            <person name="Holmes M."/>
            <person name="Brinkac L.M."/>
            <person name="Beanan M.J."/>
            <person name="DeBoy R.T."/>
            <person name="Daugherty S.C."/>
            <person name="Kolonay J.F."/>
            <person name="Madupu R."/>
            <person name="Nelson W.C."/>
            <person name="White O."/>
            <person name="Peterson J.D."/>
            <person name="Khouri H.M."/>
            <person name="Hance I."/>
            <person name="Chris Lee P."/>
            <person name="Holtzapple E.K."/>
            <person name="Scanlan D."/>
            <person name="Tran K."/>
            <person name="Moazzez A."/>
            <person name="Utterback T.R."/>
            <person name="Rizzo M."/>
            <person name="Lee K."/>
            <person name="Kosack D."/>
            <person name="Moestl D."/>
            <person name="Wedler H."/>
            <person name="Lauber J."/>
            <person name="Stjepandic D."/>
            <person name="Hoheisel J."/>
            <person name="Straetz M."/>
            <person name="Heim S."/>
            <person name="Kiewitz C."/>
            <person name="Eisen J.A."/>
            <person name="Timmis K.N."/>
            <person name="Duesterhoeft A."/>
            <person name="Tuemmler B."/>
            <person name="Fraser C.M."/>
        </authorList>
    </citation>
    <scope>NUCLEOTIDE SEQUENCE [LARGE SCALE GENOMIC DNA]</scope>
    <source>
        <strain>ATCC 47054 / DSM 6125 / CFBP 8728 / NCIMB 11950 / KT2440</strain>
    </source>
</reference>
<name>AROB_PSEPK</name>
<sequence>MQTLKVDLGERSYPIYIGEGLLDQPELLAPHIAGRQVAIVSNETVAPLYLERLSKALGAYSVLPVVLPDGEAHKNWETLQLIFDGLLTARHDRRTTVVALGGGVIGDMAGFAAACYQRGVDFIQVPTTLLSQVDSSVGGKTGINHPLGKNMVGAFYQPKAVLIDTTSLKTLPARELSAGLAEVIKYGLICDKPFLAWLEDNMQALRALDSAALTEAIRRSCAAKAAVVGADERESGLRATLNLGHTFGHAIETHMGYGVWLHGEAVAAGTVMALEMSMRLGWIDQAERDRGIRLLQDAGLPVVPPQEMTPAHFMEHMAVDKKVLDGRLRLVLLRQMGEAVVTDDYSKEILQATLSADYRAIVAQL</sequence>
<dbReference type="EC" id="4.2.3.4" evidence="1"/>
<dbReference type="EMBL" id="AE015451">
    <property type="protein sequence ID" value="AAN70643.1"/>
    <property type="molecule type" value="Genomic_DNA"/>
</dbReference>
<dbReference type="RefSeq" id="NP_747179.1">
    <property type="nucleotide sequence ID" value="NC_002947.4"/>
</dbReference>
<dbReference type="RefSeq" id="WP_010955624.1">
    <property type="nucleotide sequence ID" value="NZ_CP169744.1"/>
</dbReference>
<dbReference type="SMR" id="Q88CV2"/>
<dbReference type="STRING" id="160488.PP_5078"/>
<dbReference type="PaxDb" id="160488-PP_5078"/>
<dbReference type="GeneID" id="83682812"/>
<dbReference type="KEGG" id="ppu:PP_5078"/>
<dbReference type="PATRIC" id="fig|160488.4.peg.5420"/>
<dbReference type="eggNOG" id="COG0337">
    <property type="taxonomic scope" value="Bacteria"/>
</dbReference>
<dbReference type="HOGENOM" id="CLU_001201_0_2_6"/>
<dbReference type="OrthoDB" id="9806583at2"/>
<dbReference type="PhylomeDB" id="Q88CV2"/>
<dbReference type="BioCyc" id="PPUT160488:G1G01-5422-MONOMER"/>
<dbReference type="UniPathway" id="UPA00053">
    <property type="reaction ID" value="UER00085"/>
</dbReference>
<dbReference type="Proteomes" id="UP000000556">
    <property type="component" value="Chromosome"/>
</dbReference>
<dbReference type="GO" id="GO:0005737">
    <property type="term" value="C:cytoplasm"/>
    <property type="evidence" value="ECO:0007669"/>
    <property type="project" value="UniProtKB-SubCell"/>
</dbReference>
<dbReference type="GO" id="GO:0003856">
    <property type="term" value="F:3-dehydroquinate synthase activity"/>
    <property type="evidence" value="ECO:0007669"/>
    <property type="project" value="UniProtKB-UniRule"/>
</dbReference>
<dbReference type="GO" id="GO:0046872">
    <property type="term" value="F:metal ion binding"/>
    <property type="evidence" value="ECO:0007669"/>
    <property type="project" value="UniProtKB-KW"/>
</dbReference>
<dbReference type="GO" id="GO:0000166">
    <property type="term" value="F:nucleotide binding"/>
    <property type="evidence" value="ECO:0007669"/>
    <property type="project" value="UniProtKB-KW"/>
</dbReference>
<dbReference type="GO" id="GO:0008652">
    <property type="term" value="P:amino acid biosynthetic process"/>
    <property type="evidence" value="ECO:0007669"/>
    <property type="project" value="UniProtKB-KW"/>
</dbReference>
<dbReference type="GO" id="GO:0009073">
    <property type="term" value="P:aromatic amino acid family biosynthetic process"/>
    <property type="evidence" value="ECO:0007669"/>
    <property type="project" value="UniProtKB-KW"/>
</dbReference>
<dbReference type="GO" id="GO:0009423">
    <property type="term" value="P:chorismate biosynthetic process"/>
    <property type="evidence" value="ECO:0007669"/>
    <property type="project" value="UniProtKB-UniRule"/>
</dbReference>
<dbReference type="CDD" id="cd08195">
    <property type="entry name" value="DHQS"/>
    <property type="match status" value="1"/>
</dbReference>
<dbReference type="FunFam" id="1.20.1090.10:FF:000002">
    <property type="entry name" value="3-dehydroquinate synthase"/>
    <property type="match status" value="1"/>
</dbReference>
<dbReference type="FunFam" id="3.40.50.1970:FF:000001">
    <property type="entry name" value="3-dehydroquinate synthase"/>
    <property type="match status" value="1"/>
</dbReference>
<dbReference type="Gene3D" id="3.40.50.1970">
    <property type="match status" value="1"/>
</dbReference>
<dbReference type="Gene3D" id="1.20.1090.10">
    <property type="entry name" value="Dehydroquinate synthase-like - alpha domain"/>
    <property type="match status" value="1"/>
</dbReference>
<dbReference type="HAMAP" id="MF_00110">
    <property type="entry name" value="DHQ_synthase"/>
    <property type="match status" value="1"/>
</dbReference>
<dbReference type="InterPro" id="IPR050071">
    <property type="entry name" value="Dehydroquinate_synthase"/>
</dbReference>
<dbReference type="InterPro" id="IPR016037">
    <property type="entry name" value="DHQ_synth_AroB"/>
</dbReference>
<dbReference type="InterPro" id="IPR030963">
    <property type="entry name" value="DHQ_synth_fam"/>
</dbReference>
<dbReference type="InterPro" id="IPR030960">
    <property type="entry name" value="DHQS/DOIS_N"/>
</dbReference>
<dbReference type="InterPro" id="IPR056179">
    <property type="entry name" value="DHQS_C"/>
</dbReference>
<dbReference type="NCBIfam" id="TIGR01357">
    <property type="entry name" value="aroB"/>
    <property type="match status" value="1"/>
</dbReference>
<dbReference type="PANTHER" id="PTHR43622">
    <property type="entry name" value="3-DEHYDROQUINATE SYNTHASE"/>
    <property type="match status" value="1"/>
</dbReference>
<dbReference type="PANTHER" id="PTHR43622:SF7">
    <property type="entry name" value="3-DEHYDROQUINATE SYNTHASE, CHLOROPLASTIC"/>
    <property type="match status" value="1"/>
</dbReference>
<dbReference type="Pfam" id="PF01761">
    <property type="entry name" value="DHQ_synthase"/>
    <property type="match status" value="1"/>
</dbReference>
<dbReference type="Pfam" id="PF24621">
    <property type="entry name" value="DHQS_C"/>
    <property type="match status" value="1"/>
</dbReference>
<dbReference type="PIRSF" id="PIRSF001455">
    <property type="entry name" value="DHQ_synth"/>
    <property type="match status" value="1"/>
</dbReference>
<dbReference type="SUPFAM" id="SSF56796">
    <property type="entry name" value="Dehydroquinate synthase-like"/>
    <property type="match status" value="1"/>
</dbReference>
<protein>
    <recommendedName>
        <fullName evidence="1">3-dehydroquinate synthase</fullName>
        <shortName evidence="1">DHQS</shortName>
        <ecNumber evidence="1">4.2.3.4</ecNumber>
    </recommendedName>
</protein>
<feature type="chain" id="PRO_0000140769" description="3-dehydroquinate synthase">
    <location>
        <begin position="1"/>
        <end position="365"/>
    </location>
</feature>
<feature type="binding site" evidence="1">
    <location>
        <begin position="69"/>
        <end position="74"/>
    </location>
    <ligand>
        <name>NAD(+)</name>
        <dbReference type="ChEBI" id="CHEBI:57540"/>
    </ligand>
</feature>
<feature type="binding site" evidence="1">
    <location>
        <begin position="103"/>
        <end position="107"/>
    </location>
    <ligand>
        <name>NAD(+)</name>
        <dbReference type="ChEBI" id="CHEBI:57540"/>
    </ligand>
</feature>
<feature type="binding site" evidence="1">
    <location>
        <begin position="127"/>
        <end position="128"/>
    </location>
    <ligand>
        <name>NAD(+)</name>
        <dbReference type="ChEBI" id="CHEBI:57540"/>
    </ligand>
</feature>
<feature type="binding site" evidence="1">
    <location>
        <position position="140"/>
    </location>
    <ligand>
        <name>NAD(+)</name>
        <dbReference type="ChEBI" id="CHEBI:57540"/>
    </ligand>
</feature>
<feature type="binding site" evidence="1">
    <location>
        <position position="149"/>
    </location>
    <ligand>
        <name>NAD(+)</name>
        <dbReference type="ChEBI" id="CHEBI:57540"/>
    </ligand>
</feature>
<feature type="binding site" evidence="1">
    <location>
        <position position="182"/>
    </location>
    <ligand>
        <name>Zn(2+)</name>
        <dbReference type="ChEBI" id="CHEBI:29105"/>
    </ligand>
</feature>
<feature type="binding site" evidence="1">
    <location>
        <position position="245"/>
    </location>
    <ligand>
        <name>Zn(2+)</name>
        <dbReference type="ChEBI" id="CHEBI:29105"/>
    </ligand>
</feature>
<feature type="binding site" evidence="1">
    <location>
        <position position="262"/>
    </location>
    <ligand>
        <name>Zn(2+)</name>
        <dbReference type="ChEBI" id="CHEBI:29105"/>
    </ligand>
</feature>
<gene>
    <name evidence="1" type="primary">aroB</name>
    <name type="ordered locus">PP_5078</name>
</gene>
<organism>
    <name type="scientific">Pseudomonas putida (strain ATCC 47054 / DSM 6125 / CFBP 8728 / NCIMB 11950 / KT2440)</name>
    <dbReference type="NCBI Taxonomy" id="160488"/>
    <lineage>
        <taxon>Bacteria</taxon>
        <taxon>Pseudomonadati</taxon>
        <taxon>Pseudomonadota</taxon>
        <taxon>Gammaproteobacteria</taxon>
        <taxon>Pseudomonadales</taxon>
        <taxon>Pseudomonadaceae</taxon>
        <taxon>Pseudomonas</taxon>
    </lineage>
</organism>
<proteinExistence type="inferred from homology"/>